<accession>Q9NEF6</accession>
<accession>Q9I7X1</accession>
<name>VATD2_DROME</name>
<feature type="chain" id="PRO_0000144237" description="V-type proton ATPase subunit D 2">
    <location>
        <begin position="1"/>
        <end position="249"/>
    </location>
</feature>
<organism>
    <name type="scientific">Drosophila melanogaster</name>
    <name type="common">Fruit fly</name>
    <dbReference type="NCBI Taxonomy" id="7227"/>
    <lineage>
        <taxon>Eukaryota</taxon>
        <taxon>Metazoa</taxon>
        <taxon>Ecdysozoa</taxon>
        <taxon>Arthropoda</taxon>
        <taxon>Hexapoda</taxon>
        <taxon>Insecta</taxon>
        <taxon>Pterygota</taxon>
        <taxon>Neoptera</taxon>
        <taxon>Endopterygota</taxon>
        <taxon>Diptera</taxon>
        <taxon>Brachycera</taxon>
        <taxon>Muscomorpha</taxon>
        <taxon>Ephydroidea</taxon>
        <taxon>Drosophilidae</taxon>
        <taxon>Drosophila</taxon>
        <taxon>Sophophora</taxon>
    </lineage>
</organism>
<sequence>MAAKDRLPIFPSRGAQTLMKSRLAGATKGHGLLKKKADALQMRFRLILGKIIETKTLMGQVMKEAAFSLAEVKFTTGDINQIVLQNVTKAQIKIRTKKDNVAGVTLPIFEPYTDGVDTYELAGLARGGQQLAKLKKNYQSAVRLLVQLASLQTSFVTLDDVIKVTNRRVNAIEHVIIPRINRTIEYIISELDELEREEFYRLKKIQDKKREARKASDKLRAEQRLLGQMAEAQEVQNILDEDGDEDLLF</sequence>
<reference key="1">
    <citation type="journal article" date="2000" name="Science">
        <title>The genome sequence of Drosophila melanogaster.</title>
        <authorList>
            <person name="Adams M.D."/>
            <person name="Celniker S.E."/>
            <person name="Holt R.A."/>
            <person name="Evans C.A."/>
            <person name="Gocayne J.D."/>
            <person name="Amanatides P.G."/>
            <person name="Scherer S.E."/>
            <person name="Li P.W."/>
            <person name="Hoskins R.A."/>
            <person name="Galle R.F."/>
            <person name="George R.A."/>
            <person name="Lewis S.E."/>
            <person name="Richards S."/>
            <person name="Ashburner M."/>
            <person name="Henderson S.N."/>
            <person name="Sutton G.G."/>
            <person name="Wortman J.R."/>
            <person name="Yandell M.D."/>
            <person name="Zhang Q."/>
            <person name="Chen L.X."/>
            <person name="Brandon R.C."/>
            <person name="Rogers Y.-H.C."/>
            <person name="Blazej R.G."/>
            <person name="Champe M."/>
            <person name="Pfeiffer B.D."/>
            <person name="Wan K.H."/>
            <person name="Doyle C."/>
            <person name="Baxter E.G."/>
            <person name="Helt G."/>
            <person name="Nelson C.R."/>
            <person name="Miklos G.L.G."/>
            <person name="Abril J.F."/>
            <person name="Agbayani A."/>
            <person name="An H.-J."/>
            <person name="Andrews-Pfannkoch C."/>
            <person name="Baldwin D."/>
            <person name="Ballew R.M."/>
            <person name="Basu A."/>
            <person name="Baxendale J."/>
            <person name="Bayraktaroglu L."/>
            <person name="Beasley E.M."/>
            <person name="Beeson K.Y."/>
            <person name="Benos P.V."/>
            <person name="Berman B.P."/>
            <person name="Bhandari D."/>
            <person name="Bolshakov S."/>
            <person name="Borkova D."/>
            <person name="Botchan M.R."/>
            <person name="Bouck J."/>
            <person name="Brokstein P."/>
            <person name="Brottier P."/>
            <person name="Burtis K.C."/>
            <person name="Busam D.A."/>
            <person name="Butler H."/>
            <person name="Cadieu E."/>
            <person name="Center A."/>
            <person name="Chandra I."/>
            <person name="Cherry J.M."/>
            <person name="Cawley S."/>
            <person name="Dahlke C."/>
            <person name="Davenport L.B."/>
            <person name="Davies P."/>
            <person name="de Pablos B."/>
            <person name="Delcher A."/>
            <person name="Deng Z."/>
            <person name="Mays A.D."/>
            <person name="Dew I."/>
            <person name="Dietz S.M."/>
            <person name="Dodson K."/>
            <person name="Doup L.E."/>
            <person name="Downes M."/>
            <person name="Dugan-Rocha S."/>
            <person name="Dunkov B.C."/>
            <person name="Dunn P."/>
            <person name="Durbin K.J."/>
            <person name="Evangelista C.C."/>
            <person name="Ferraz C."/>
            <person name="Ferriera S."/>
            <person name="Fleischmann W."/>
            <person name="Fosler C."/>
            <person name="Gabrielian A.E."/>
            <person name="Garg N.S."/>
            <person name="Gelbart W.M."/>
            <person name="Glasser K."/>
            <person name="Glodek A."/>
            <person name="Gong F."/>
            <person name="Gorrell J.H."/>
            <person name="Gu Z."/>
            <person name="Guan P."/>
            <person name="Harris M."/>
            <person name="Harris N.L."/>
            <person name="Harvey D.A."/>
            <person name="Heiman T.J."/>
            <person name="Hernandez J.R."/>
            <person name="Houck J."/>
            <person name="Hostin D."/>
            <person name="Houston K.A."/>
            <person name="Howland T.J."/>
            <person name="Wei M.-H."/>
            <person name="Ibegwam C."/>
            <person name="Jalali M."/>
            <person name="Kalush F."/>
            <person name="Karpen G.H."/>
            <person name="Ke Z."/>
            <person name="Kennison J.A."/>
            <person name="Ketchum K.A."/>
            <person name="Kimmel B.E."/>
            <person name="Kodira C.D."/>
            <person name="Kraft C.L."/>
            <person name="Kravitz S."/>
            <person name="Kulp D."/>
            <person name="Lai Z."/>
            <person name="Lasko P."/>
            <person name="Lei Y."/>
            <person name="Levitsky A.A."/>
            <person name="Li J.H."/>
            <person name="Li Z."/>
            <person name="Liang Y."/>
            <person name="Lin X."/>
            <person name="Liu X."/>
            <person name="Mattei B."/>
            <person name="McIntosh T.C."/>
            <person name="McLeod M.P."/>
            <person name="McPherson D."/>
            <person name="Merkulov G."/>
            <person name="Milshina N.V."/>
            <person name="Mobarry C."/>
            <person name="Morris J."/>
            <person name="Moshrefi A."/>
            <person name="Mount S.M."/>
            <person name="Moy M."/>
            <person name="Murphy B."/>
            <person name="Murphy L."/>
            <person name="Muzny D.M."/>
            <person name="Nelson D.L."/>
            <person name="Nelson D.R."/>
            <person name="Nelson K.A."/>
            <person name="Nixon K."/>
            <person name="Nusskern D.R."/>
            <person name="Pacleb J.M."/>
            <person name="Palazzolo M."/>
            <person name="Pittman G.S."/>
            <person name="Pan S."/>
            <person name="Pollard J."/>
            <person name="Puri V."/>
            <person name="Reese M.G."/>
            <person name="Reinert K."/>
            <person name="Remington K."/>
            <person name="Saunders R.D.C."/>
            <person name="Scheeler F."/>
            <person name="Shen H."/>
            <person name="Shue B.C."/>
            <person name="Siden-Kiamos I."/>
            <person name="Simpson M."/>
            <person name="Skupski M.P."/>
            <person name="Smith T.J."/>
            <person name="Spier E."/>
            <person name="Spradling A.C."/>
            <person name="Stapleton M."/>
            <person name="Strong R."/>
            <person name="Sun E."/>
            <person name="Svirskas R."/>
            <person name="Tector C."/>
            <person name="Turner R."/>
            <person name="Venter E."/>
            <person name="Wang A.H."/>
            <person name="Wang X."/>
            <person name="Wang Z.-Y."/>
            <person name="Wassarman D.A."/>
            <person name="Weinstock G.M."/>
            <person name="Weissenbach J."/>
            <person name="Williams S.M."/>
            <person name="Woodage T."/>
            <person name="Worley K.C."/>
            <person name="Wu D."/>
            <person name="Yang S."/>
            <person name="Yao Q.A."/>
            <person name="Ye J."/>
            <person name="Yeh R.-F."/>
            <person name="Zaveri J.S."/>
            <person name="Zhan M."/>
            <person name="Zhang G."/>
            <person name="Zhao Q."/>
            <person name="Zheng L."/>
            <person name="Zheng X.H."/>
            <person name="Zhong F.N."/>
            <person name="Zhong W."/>
            <person name="Zhou X."/>
            <person name="Zhu S.C."/>
            <person name="Zhu X."/>
            <person name="Smith H.O."/>
            <person name="Gibbs R.A."/>
            <person name="Myers E.W."/>
            <person name="Rubin G.M."/>
            <person name="Venter J.C."/>
        </authorList>
    </citation>
    <scope>NUCLEOTIDE SEQUENCE [LARGE SCALE GENOMIC DNA]</scope>
    <source>
        <strain>Berkeley</strain>
    </source>
</reference>
<reference key="2">
    <citation type="journal article" date="2002" name="Genome Biol.">
        <title>Annotation of the Drosophila melanogaster euchromatic genome: a systematic review.</title>
        <authorList>
            <person name="Misra S."/>
            <person name="Crosby M.A."/>
            <person name="Mungall C.J."/>
            <person name="Matthews B.B."/>
            <person name="Campbell K.S."/>
            <person name="Hradecky P."/>
            <person name="Huang Y."/>
            <person name="Kaminker J.S."/>
            <person name="Millburn G.H."/>
            <person name="Prochnik S.E."/>
            <person name="Smith C.D."/>
            <person name="Tupy J.L."/>
            <person name="Whitfield E.J."/>
            <person name="Bayraktaroglu L."/>
            <person name="Berman B.P."/>
            <person name="Bettencourt B.R."/>
            <person name="Celniker S.E."/>
            <person name="de Grey A.D.N.J."/>
            <person name="Drysdale R.A."/>
            <person name="Harris N.L."/>
            <person name="Richter J."/>
            <person name="Russo S."/>
            <person name="Schroeder A.J."/>
            <person name="Shu S.Q."/>
            <person name="Stapleton M."/>
            <person name="Yamada C."/>
            <person name="Ashburner M."/>
            <person name="Gelbart W.M."/>
            <person name="Rubin G.M."/>
            <person name="Lewis S.E."/>
        </authorList>
    </citation>
    <scope>GENOME REANNOTATION</scope>
    <source>
        <strain>Berkeley</strain>
    </source>
</reference>
<reference key="3">
    <citation type="journal article" date="2000" name="Science">
        <title>From sequence to chromosome: the tip of the X chromosome of D. melanogaster.</title>
        <authorList>
            <person name="Benos P.V."/>
            <person name="Gatt M.K."/>
            <person name="Ashburner M."/>
            <person name="Murphy L."/>
            <person name="Harris D."/>
            <person name="Barrell B.G."/>
            <person name="Ferraz C."/>
            <person name="Vidal S."/>
            <person name="Brun C."/>
            <person name="Demailles J."/>
            <person name="Cadieu E."/>
            <person name="Dreano S."/>
            <person name="Gloux S."/>
            <person name="Lelaure V."/>
            <person name="Mottier S."/>
            <person name="Galibert F."/>
            <person name="Borkova D."/>
            <person name="Minana B."/>
            <person name="Kafatos F.C."/>
            <person name="Louis C."/>
            <person name="Siden-Kiamos I."/>
            <person name="Bolshakov S."/>
            <person name="Papagiannakis G."/>
            <person name="Spanos L."/>
            <person name="Cox S."/>
            <person name="Madueno E."/>
            <person name="de Pablos B."/>
            <person name="Modolell J."/>
            <person name="Peter A."/>
            <person name="Schoettler P."/>
            <person name="Werner M."/>
            <person name="Mourkioti F."/>
            <person name="Beinert N."/>
            <person name="Dowe G."/>
            <person name="Schaefer U."/>
            <person name="Jaeckle H."/>
            <person name="Bucheton A."/>
            <person name="Callister D.M."/>
            <person name="Campbell L.A."/>
            <person name="Darlamitsou A."/>
            <person name="Henderson N.S."/>
            <person name="McMillan P.J."/>
            <person name="Salles C."/>
            <person name="Tait E.A."/>
            <person name="Valenti P."/>
            <person name="Saunders R.D.C."/>
            <person name="Glover D.M."/>
        </authorList>
    </citation>
    <scope>NUCLEOTIDE SEQUENCE [LARGE SCALE GENOMIC DNA]</scope>
    <source>
        <strain>Oregon-R</strain>
    </source>
</reference>
<evidence type="ECO:0000250" key="1">
    <source>
        <dbReference type="UniProtKB" id="P39942"/>
    </source>
</evidence>
<evidence type="ECO:0000250" key="2">
    <source>
        <dbReference type="UniProtKB" id="Q9Y5K8"/>
    </source>
</evidence>
<evidence type="ECO:0000305" key="3"/>
<dbReference type="EMBL" id="AL138972">
    <property type="protein sequence ID" value="CAB72289.1"/>
    <property type="molecule type" value="Genomic_DNA"/>
</dbReference>
<dbReference type="EMBL" id="AE014298">
    <property type="protein sequence ID" value="AAG22401.2"/>
    <property type="molecule type" value="Genomic_DNA"/>
</dbReference>
<dbReference type="RefSeq" id="NP_001284828.1">
    <property type="nucleotide sequence ID" value="NM_001297899.1"/>
</dbReference>
<dbReference type="RefSeq" id="NP_570008.1">
    <property type="nucleotide sequence ID" value="NM_130652.4"/>
</dbReference>
<dbReference type="SMR" id="Q9NEF6"/>
<dbReference type="BioGRID" id="57769">
    <property type="interactions" value="4"/>
</dbReference>
<dbReference type="DIP" id="DIP-21466N"/>
<dbReference type="FunCoup" id="Q9NEF6">
    <property type="interactions" value="986"/>
</dbReference>
<dbReference type="IntAct" id="Q9NEF6">
    <property type="interactions" value="13"/>
</dbReference>
<dbReference type="STRING" id="7227.FBpp0311750"/>
<dbReference type="PaxDb" id="7227-FBpp0070434"/>
<dbReference type="EnsemblMetazoa" id="FBtr0339401">
    <property type="protein sequence ID" value="FBpp0308493"/>
    <property type="gene ID" value="FBgn0040377"/>
</dbReference>
<dbReference type="EnsemblMetazoa" id="FBtr0345706">
    <property type="protein sequence ID" value="FBpp0311750"/>
    <property type="gene ID" value="FBgn0040377"/>
</dbReference>
<dbReference type="GeneID" id="31235"/>
<dbReference type="KEGG" id="dme:Dmel_CG8310"/>
<dbReference type="UCSC" id="CG8310-RA">
    <property type="organism name" value="d. melanogaster"/>
</dbReference>
<dbReference type="AGR" id="FB:FBgn0040377"/>
<dbReference type="CTD" id="31235"/>
<dbReference type="FlyBase" id="FBgn0040377">
    <property type="gene designation" value="Vha36-3"/>
</dbReference>
<dbReference type="VEuPathDB" id="VectorBase:FBgn0040377"/>
<dbReference type="eggNOG" id="KOG1647">
    <property type="taxonomic scope" value="Eukaryota"/>
</dbReference>
<dbReference type="HOGENOM" id="CLU_069688_0_0_1"/>
<dbReference type="InParanoid" id="Q9NEF6"/>
<dbReference type="OMA" id="TQKRANA"/>
<dbReference type="OrthoDB" id="7676488at2759"/>
<dbReference type="PhylomeDB" id="Q9NEF6"/>
<dbReference type="SignaLink" id="Q9NEF6"/>
<dbReference type="BioGRID-ORCS" id="31235">
    <property type="hits" value="0 hits in 1 CRISPR screen"/>
</dbReference>
<dbReference type="ChiTaRS" id="Vha36-3">
    <property type="organism name" value="fly"/>
</dbReference>
<dbReference type="GenomeRNAi" id="31235"/>
<dbReference type="PRO" id="PR:Q9NEF6"/>
<dbReference type="Proteomes" id="UP000000803">
    <property type="component" value="Chromosome X"/>
</dbReference>
<dbReference type="Bgee" id="FBgn0040377">
    <property type="expression patterns" value="Expressed in adult tracheocyte (Drosophila) in adult thorax and 31 other cell types or tissues"/>
</dbReference>
<dbReference type="ExpressionAtlas" id="Q9NEF6">
    <property type="expression patterns" value="baseline and differential"/>
</dbReference>
<dbReference type="GO" id="GO:0033176">
    <property type="term" value="C:proton-transporting V-type ATPase complex"/>
    <property type="evidence" value="ECO:0000250"/>
    <property type="project" value="FlyBase"/>
</dbReference>
<dbReference type="GO" id="GO:0046961">
    <property type="term" value="F:proton-transporting ATPase activity, rotational mechanism"/>
    <property type="evidence" value="ECO:0007669"/>
    <property type="project" value="InterPro"/>
</dbReference>
<dbReference type="GO" id="GO:1902600">
    <property type="term" value="P:proton transmembrane transport"/>
    <property type="evidence" value="ECO:0000305"/>
    <property type="project" value="FlyBase"/>
</dbReference>
<dbReference type="FunFam" id="1.10.287.3240:FF:000001">
    <property type="entry name" value="V-type proton ATPase subunit D"/>
    <property type="match status" value="1"/>
</dbReference>
<dbReference type="Gene3D" id="1.10.287.3240">
    <property type="match status" value="1"/>
</dbReference>
<dbReference type="InterPro" id="IPR002699">
    <property type="entry name" value="V_ATPase_D"/>
</dbReference>
<dbReference type="NCBIfam" id="TIGR00309">
    <property type="entry name" value="V_ATPase_subD"/>
    <property type="match status" value="1"/>
</dbReference>
<dbReference type="PANTHER" id="PTHR11671">
    <property type="entry name" value="V-TYPE ATP SYNTHASE SUBUNIT D"/>
    <property type="match status" value="1"/>
</dbReference>
<dbReference type="Pfam" id="PF01813">
    <property type="entry name" value="ATP-synt_D"/>
    <property type="match status" value="1"/>
</dbReference>
<protein>
    <recommendedName>
        <fullName>V-type proton ATPase subunit D 2</fullName>
        <shortName>V-ATPase subunit D 2</shortName>
    </recommendedName>
    <alternativeName>
        <fullName>Vacuolar H+ ATPase subunit 36-3</fullName>
    </alternativeName>
    <alternativeName>
        <fullName>Vacuolar proton pump subunit D 2</fullName>
    </alternativeName>
</protein>
<gene>
    <name type="primary">Vha36-3</name>
    <name type="ORF">CG8310</name>
</gene>
<keyword id="KW-0375">Hydrogen ion transport</keyword>
<keyword id="KW-0406">Ion transport</keyword>
<keyword id="KW-1185">Reference proteome</keyword>
<keyword id="KW-0813">Transport</keyword>
<comment type="function">
    <text evidence="1 2">Subunit of the V1 complex of vacuolar(H+)-ATPase (V-ATPase), a multisubunit enzyme composed of a peripheral complex (V1) that hydrolyzes ATP and a membrane integral complex (V0) that translocates protons (By similarity). V-ATPase is responsible for acidifying and maintaining the pH of intracellular compartments and in some cell types, is targeted to the plasma membrane, where it is responsible for acidifying the extracellular environment (By similarity).</text>
</comment>
<comment type="subunit">
    <text evidence="2">V-ATPase is a heteromultimeric enzyme made up of two complexes: the ATP-hydrolytic V1 complex and the proton translocation V0 complex (By similarity). The V1 complex consists of three catalytic AB heterodimers that form a heterohexamer, three peripheral stalks each consisting of EG heterodimers, one central rotor including subunits D and F, and the regulatory subunits C and H (By similarity). The proton translocation complex V0 consists of the proton transport subunit a, a ring of proteolipid subunits c9c'', rotary subunit d, subunits e and f, and the accessory subunits VhaAC45 and ATP6AP2 (By similarity).</text>
</comment>
<comment type="similarity">
    <text evidence="3">Belongs to the V-ATPase D subunit family.</text>
</comment>
<proteinExistence type="inferred from homology"/>